<sequence length="216" mass="23416">MTDSTQTPDIPLLDAVQARLLGCLVEKEATTPDTYPLTVNAAQSAANQKTAREPVMNIDAGGVQHALRQLETLGLARQHFSSRADRYEHRLQAALDLTRQQTVLLAQLLLRGPQTLGELVTRSERLHRFADADEARHAIERLQQRALLVVLPRASGQREDRYMHLLCGEVDGAALAAKYASSGGGSEAADPGLAERVAQLEAAVAELQAQLAELRG</sequence>
<proteinExistence type="inferred from homology"/>
<dbReference type="EMBL" id="CP001111">
    <property type="protein sequence ID" value="ACF49757.1"/>
    <property type="molecule type" value="Genomic_DNA"/>
</dbReference>
<dbReference type="RefSeq" id="WP_012509632.1">
    <property type="nucleotide sequence ID" value="NC_011071.1"/>
</dbReference>
<dbReference type="SMR" id="B4SRN7"/>
<dbReference type="STRING" id="391008.Smal_0052"/>
<dbReference type="KEGG" id="smt:Smal_0052"/>
<dbReference type="eggNOG" id="COG3132">
    <property type="taxonomic scope" value="Bacteria"/>
</dbReference>
<dbReference type="HOGENOM" id="CLU_057831_0_0_6"/>
<dbReference type="OrthoDB" id="9784785at2"/>
<dbReference type="Proteomes" id="UP000001867">
    <property type="component" value="Chromosome"/>
</dbReference>
<dbReference type="Gene3D" id="1.10.10.10">
    <property type="entry name" value="Winged helix-like DNA-binding domain superfamily/Winged helix DNA-binding domain"/>
    <property type="match status" value="2"/>
</dbReference>
<dbReference type="HAMAP" id="MF_01584">
    <property type="entry name" value="UPF0502"/>
    <property type="match status" value="1"/>
</dbReference>
<dbReference type="InterPro" id="IPR007432">
    <property type="entry name" value="DUF480"/>
</dbReference>
<dbReference type="InterPro" id="IPR036388">
    <property type="entry name" value="WH-like_DNA-bd_sf"/>
</dbReference>
<dbReference type="InterPro" id="IPR036390">
    <property type="entry name" value="WH_DNA-bd_sf"/>
</dbReference>
<dbReference type="PANTHER" id="PTHR38768">
    <property type="entry name" value="UPF0502 PROTEIN YCEH"/>
    <property type="match status" value="1"/>
</dbReference>
<dbReference type="PANTHER" id="PTHR38768:SF1">
    <property type="entry name" value="UPF0502 PROTEIN YCEH"/>
    <property type="match status" value="1"/>
</dbReference>
<dbReference type="Pfam" id="PF04337">
    <property type="entry name" value="DUF480"/>
    <property type="match status" value="1"/>
</dbReference>
<dbReference type="SUPFAM" id="SSF46785">
    <property type="entry name" value="Winged helix' DNA-binding domain"/>
    <property type="match status" value="2"/>
</dbReference>
<accession>B4SRN7</accession>
<organism>
    <name type="scientific">Stenotrophomonas maltophilia (strain R551-3)</name>
    <dbReference type="NCBI Taxonomy" id="391008"/>
    <lineage>
        <taxon>Bacteria</taxon>
        <taxon>Pseudomonadati</taxon>
        <taxon>Pseudomonadota</taxon>
        <taxon>Gammaproteobacteria</taxon>
        <taxon>Lysobacterales</taxon>
        <taxon>Lysobacteraceae</taxon>
        <taxon>Stenotrophomonas</taxon>
        <taxon>Stenotrophomonas maltophilia group</taxon>
    </lineage>
</organism>
<comment type="similarity">
    <text evidence="1">Belongs to the UPF0502 family.</text>
</comment>
<gene>
    <name type="ordered locus">Smal_0052</name>
</gene>
<protein>
    <recommendedName>
        <fullName evidence="1">UPF0502 protein Smal_0052</fullName>
    </recommendedName>
</protein>
<feature type="chain" id="PRO_0000382568" description="UPF0502 protein Smal_0052">
    <location>
        <begin position="1"/>
        <end position="216"/>
    </location>
</feature>
<name>Y052_STRM5</name>
<evidence type="ECO:0000255" key="1">
    <source>
        <dbReference type="HAMAP-Rule" id="MF_01584"/>
    </source>
</evidence>
<reference key="1">
    <citation type="submission" date="2008-06" db="EMBL/GenBank/DDBJ databases">
        <title>Complete sequence of Stenotrophomonas maltophilia R551-3.</title>
        <authorList>
            <consortium name="US DOE Joint Genome Institute"/>
            <person name="Lucas S."/>
            <person name="Copeland A."/>
            <person name="Lapidus A."/>
            <person name="Glavina del Rio T."/>
            <person name="Dalin E."/>
            <person name="Tice H."/>
            <person name="Pitluck S."/>
            <person name="Chain P."/>
            <person name="Malfatti S."/>
            <person name="Shin M."/>
            <person name="Vergez L."/>
            <person name="Lang D."/>
            <person name="Schmutz J."/>
            <person name="Larimer F."/>
            <person name="Land M."/>
            <person name="Hauser L."/>
            <person name="Kyrpides N."/>
            <person name="Mikhailova N."/>
            <person name="Taghavi S."/>
            <person name="Monchy S."/>
            <person name="Newman L."/>
            <person name="Vangronsveld J."/>
            <person name="van der Lelie D."/>
            <person name="Richardson P."/>
        </authorList>
    </citation>
    <scope>NUCLEOTIDE SEQUENCE [LARGE SCALE GENOMIC DNA]</scope>
    <source>
        <strain>R551-3</strain>
    </source>
</reference>